<evidence type="ECO:0000250" key="1">
    <source>
        <dbReference type="UniProtKB" id="Q14B02"/>
    </source>
</evidence>
<evidence type="ECO:0000250" key="2">
    <source>
        <dbReference type="UniProtKB" id="Q8WVZ7"/>
    </source>
</evidence>
<evidence type="ECO:0000255" key="3"/>
<evidence type="ECO:0000255" key="4">
    <source>
        <dbReference type="PROSITE-ProRule" id="PRU00175"/>
    </source>
</evidence>
<evidence type="ECO:0000256" key="5">
    <source>
        <dbReference type="SAM" id="MobiDB-lite"/>
    </source>
</evidence>
<evidence type="ECO:0000305" key="6"/>
<proteinExistence type="evidence at transcript level"/>
<accession>Q6AY01</accession>
<keyword id="KW-0256">Endoplasmic reticulum</keyword>
<keyword id="KW-0472">Membrane</keyword>
<keyword id="KW-0479">Metal-binding</keyword>
<keyword id="KW-1185">Reference proteome</keyword>
<keyword id="KW-0808">Transferase</keyword>
<keyword id="KW-0812">Transmembrane</keyword>
<keyword id="KW-1133">Transmembrane helix</keyword>
<keyword id="KW-0832">Ubl conjugation</keyword>
<keyword id="KW-0833">Ubl conjugation pathway</keyword>
<keyword id="KW-0862">Zinc</keyword>
<keyword id="KW-0863">Zinc-finger</keyword>
<feature type="chain" id="PRO_0000380753" description="E3 ubiquitin-protein ligase RNF133">
    <location>
        <begin position="1"/>
        <end position="381"/>
    </location>
</feature>
<feature type="transmembrane region" description="Helical" evidence="3">
    <location>
        <begin position="186"/>
        <end position="208"/>
    </location>
</feature>
<feature type="domain" description="PA">
    <location>
        <begin position="65"/>
        <end position="167"/>
    </location>
</feature>
<feature type="zinc finger region" description="RING-type; atypical" evidence="4">
    <location>
        <begin position="256"/>
        <end position="297"/>
    </location>
</feature>
<feature type="region of interest" description="Disordered" evidence="5">
    <location>
        <begin position="340"/>
        <end position="381"/>
    </location>
</feature>
<feature type="compositionally biased region" description="Polar residues" evidence="5">
    <location>
        <begin position="344"/>
        <end position="363"/>
    </location>
</feature>
<name>RN133_RAT</name>
<dbReference type="EC" id="2.3.2.27" evidence="1"/>
<dbReference type="EMBL" id="BC079249">
    <property type="protein sequence ID" value="AAH79249.1"/>
    <property type="molecule type" value="mRNA"/>
</dbReference>
<dbReference type="RefSeq" id="NP_001037743.1">
    <property type="nucleotide sequence ID" value="NM_001044278.1"/>
</dbReference>
<dbReference type="RefSeq" id="XP_006236206.1">
    <property type="nucleotide sequence ID" value="XM_006236144.5"/>
</dbReference>
<dbReference type="SMR" id="Q6AY01"/>
<dbReference type="FunCoup" id="Q6AY01">
    <property type="interactions" value="3"/>
</dbReference>
<dbReference type="PhosphoSitePlus" id="Q6AY01"/>
<dbReference type="Ensembl" id="ENSRNOT00000115813.1">
    <property type="protein sequence ID" value="ENSRNOP00000079460.1"/>
    <property type="gene ID" value="ENSRNOG00000065130.1"/>
</dbReference>
<dbReference type="GeneID" id="681395"/>
<dbReference type="KEGG" id="rno:681395"/>
<dbReference type="UCSC" id="RGD:1596695">
    <property type="organism name" value="rat"/>
</dbReference>
<dbReference type="AGR" id="RGD:1596695"/>
<dbReference type="CTD" id="168433"/>
<dbReference type="RGD" id="1596695">
    <property type="gene designation" value="Rnf133"/>
</dbReference>
<dbReference type="GeneTree" id="ENSGT00940000163928"/>
<dbReference type="InParanoid" id="Q6AY01"/>
<dbReference type="OMA" id="YFIFYHI"/>
<dbReference type="OrthoDB" id="5357315at2759"/>
<dbReference type="PhylomeDB" id="Q6AY01"/>
<dbReference type="UniPathway" id="UPA00143"/>
<dbReference type="PRO" id="PR:Q6AY01"/>
<dbReference type="Proteomes" id="UP000002494">
    <property type="component" value="Chromosome 4"/>
</dbReference>
<dbReference type="GO" id="GO:0005737">
    <property type="term" value="C:cytoplasm"/>
    <property type="evidence" value="ECO:0000318"/>
    <property type="project" value="GO_Central"/>
</dbReference>
<dbReference type="GO" id="GO:0005783">
    <property type="term" value="C:endoplasmic reticulum"/>
    <property type="evidence" value="ECO:0000318"/>
    <property type="project" value="GO_Central"/>
</dbReference>
<dbReference type="GO" id="GO:0005789">
    <property type="term" value="C:endoplasmic reticulum membrane"/>
    <property type="evidence" value="ECO:0000266"/>
    <property type="project" value="RGD"/>
</dbReference>
<dbReference type="GO" id="GO:0005794">
    <property type="term" value="C:Golgi apparatus"/>
    <property type="evidence" value="ECO:0000318"/>
    <property type="project" value="GO_Central"/>
</dbReference>
<dbReference type="GO" id="GO:0005770">
    <property type="term" value="C:late endosome"/>
    <property type="evidence" value="ECO:0000318"/>
    <property type="project" value="GO_Central"/>
</dbReference>
<dbReference type="GO" id="GO:0061630">
    <property type="term" value="F:ubiquitin protein ligase activity"/>
    <property type="evidence" value="ECO:0000318"/>
    <property type="project" value="GO_Central"/>
</dbReference>
<dbReference type="GO" id="GO:0008270">
    <property type="term" value="F:zinc ion binding"/>
    <property type="evidence" value="ECO:0007669"/>
    <property type="project" value="UniProtKB-KW"/>
</dbReference>
<dbReference type="GO" id="GO:0051865">
    <property type="term" value="P:protein autoubiquitination"/>
    <property type="evidence" value="ECO:0000266"/>
    <property type="project" value="RGD"/>
</dbReference>
<dbReference type="GO" id="GO:0006511">
    <property type="term" value="P:ubiquitin-dependent protein catabolic process"/>
    <property type="evidence" value="ECO:0000318"/>
    <property type="project" value="GO_Central"/>
</dbReference>
<dbReference type="CDD" id="cd02122">
    <property type="entry name" value="PA_GRAIL_like"/>
    <property type="match status" value="1"/>
</dbReference>
<dbReference type="CDD" id="cd16802">
    <property type="entry name" value="RING-H2_RNF128-like"/>
    <property type="match status" value="1"/>
</dbReference>
<dbReference type="FunFam" id="3.50.30.30:FF:000003">
    <property type="entry name" value="E3 ubiquitin-protein ligase RNF128"/>
    <property type="match status" value="1"/>
</dbReference>
<dbReference type="FunFam" id="3.30.40.10:FF:000009">
    <property type="entry name" value="E3 ubiquitin-protein ligase RNF130"/>
    <property type="match status" value="1"/>
</dbReference>
<dbReference type="Gene3D" id="3.50.30.30">
    <property type="match status" value="1"/>
</dbReference>
<dbReference type="Gene3D" id="3.30.40.10">
    <property type="entry name" value="Zinc/RING finger domain, C3HC4 (zinc finger)"/>
    <property type="match status" value="1"/>
</dbReference>
<dbReference type="InterPro" id="IPR046450">
    <property type="entry name" value="PA_dom_sf"/>
</dbReference>
<dbReference type="InterPro" id="IPR003137">
    <property type="entry name" value="PA_domain"/>
</dbReference>
<dbReference type="InterPro" id="IPR001841">
    <property type="entry name" value="Znf_RING"/>
</dbReference>
<dbReference type="InterPro" id="IPR013083">
    <property type="entry name" value="Znf_RING/FYVE/PHD"/>
</dbReference>
<dbReference type="PANTHER" id="PTHR46539">
    <property type="entry name" value="E3 UBIQUITIN-PROTEIN LIGASE ATL42"/>
    <property type="match status" value="1"/>
</dbReference>
<dbReference type="PANTHER" id="PTHR46539:SF27">
    <property type="entry name" value="RING FINGER PROTEIN 128"/>
    <property type="match status" value="1"/>
</dbReference>
<dbReference type="Pfam" id="PF02225">
    <property type="entry name" value="PA"/>
    <property type="match status" value="1"/>
</dbReference>
<dbReference type="Pfam" id="PF13639">
    <property type="entry name" value="zf-RING_2"/>
    <property type="match status" value="1"/>
</dbReference>
<dbReference type="SMART" id="SM00184">
    <property type="entry name" value="RING"/>
    <property type="match status" value="1"/>
</dbReference>
<dbReference type="SUPFAM" id="SSF52025">
    <property type="entry name" value="PA domain"/>
    <property type="match status" value="1"/>
</dbReference>
<dbReference type="SUPFAM" id="SSF57850">
    <property type="entry name" value="RING/U-box"/>
    <property type="match status" value="1"/>
</dbReference>
<dbReference type="PROSITE" id="PS50089">
    <property type="entry name" value="ZF_RING_2"/>
    <property type="match status" value="1"/>
</dbReference>
<sequence length="381" mass="42872">MNPLQTGPWQTSAPSFWLLKFSFIWLVSQNCCTASAVWTAYMNISFHVGNRMLSELGETGVFGRSSILKRVAGVVVPPEGKIQNACDPNTSFILPRNKEPWIALIERGGCAFTQKIKVASENGARGVIIYNFPGTGNQVFPMSHQAFEDIVVVMIGNVKGMEILHLIRKGVHVTVMVEVGRKHVIWLNHYFVSFMIVTTATLAYFTFYHIRRLWVARIEDRRWKRLTRELKKAFGQLQVRILKEGDEEVSPNADSCVICFEAYKPNEIVRILTCKHFFHKNCIDPWILAHGTCPMCKCDILKALGIQMDIEDGSDSLQVLMSNELPGTFSAMEEELNNELPPARTSSKVTHVQEHPTSVNVGSQPPEAEETGHPSFGQHDL</sequence>
<comment type="function">
    <text evidence="1 2">Has E3 ubiquitin-protein ligase activity. Plays a role in male fecundity through the interaction with the E2 ubituitin-protein ligase UBE2J1.</text>
</comment>
<comment type="catalytic activity">
    <reaction evidence="1">
        <text>S-ubiquitinyl-[E2 ubiquitin-conjugating enzyme]-L-cysteine + [acceptor protein]-L-lysine = [E2 ubiquitin-conjugating enzyme]-L-cysteine + N(6)-ubiquitinyl-[acceptor protein]-L-lysine.</text>
        <dbReference type="EC" id="2.3.2.27"/>
    </reaction>
</comment>
<comment type="pathway">
    <text evidence="1">Protein modification; protein ubiquitination.</text>
</comment>
<comment type="subunit">
    <text evidence="2">Interacts with E3 ligase UBE2J1.</text>
</comment>
<comment type="subcellular location">
    <subcellularLocation>
        <location evidence="1">Endoplasmic reticulum membrane</location>
        <topology evidence="1">Single-pass membrane protein</topology>
    </subcellularLocation>
</comment>
<comment type="PTM">
    <text evidence="1">Auto-ubiquitinated.</text>
</comment>
<protein>
    <recommendedName>
        <fullName>E3 ubiquitin-protein ligase RNF133</fullName>
        <ecNumber evidence="1">2.3.2.27</ecNumber>
    </recommendedName>
    <alternativeName>
        <fullName>RING finger protein 133</fullName>
    </alternativeName>
    <alternativeName>
        <fullName evidence="6">RING-type E3 ubiquitin transferase RNF133</fullName>
    </alternativeName>
</protein>
<gene>
    <name type="primary">Rnf133</name>
</gene>
<organism>
    <name type="scientific">Rattus norvegicus</name>
    <name type="common">Rat</name>
    <dbReference type="NCBI Taxonomy" id="10116"/>
    <lineage>
        <taxon>Eukaryota</taxon>
        <taxon>Metazoa</taxon>
        <taxon>Chordata</taxon>
        <taxon>Craniata</taxon>
        <taxon>Vertebrata</taxon>
        <taxon>Euteleostomi</taxon>
        <taxon>Mammalia</taxon>
        <taxon>Eutheria</taxon>
        <taxon>Euarchontoglires</taxon>
        <taxon>Glires</taxon>
        <taxon>Rodentia</taxon>
        <taxon>Myomorpha</taxon>
        <taxon>Muroidea</taxon>
        <taxon>Muridae</taxon>
        <taxon>Murinae</taxon>
        <taxon>Rattus</taxon>
    </lineage>
</organism>
<reference key="1">
    <citation type="journal article" date="2004" name="Genome Res.">
        <title>The status, quality, and expansion of the NIH full-length cDNA project: the Mammalian Gene Collection (MGC).</title>
        <authorList>
            <consortium name="The MGC Project Team"/>
        </authorList>
    </citation>
    <scope>NUCLEOTIDE SEQUENCE [LARGE SCALE MRNA]</scope>
    <source>
        <tissue>Testis</tissue>
    </source>
</reference>